<dbReference type="EMBL" id="AP008230">
    <property type="protein sequence ID" value="BAE84381.1"/>
    <property type="molecule type" value="Genomic_DNA"/>
</dbReference>
<dbReference type="RefSeq" id="WP_005813207.1">
    <property type="nucleotide sequence ID" value="NC_007907.1"/>
</dbReference>
<dbReference type="SMR" id="Q24UB1"/>
<dbReference type="STRING" id="138119.DSY2592"/>
<dbReference type="KEGG" id="dsy:DSY2592"/>
<dbReference type="eggNOG" id="COG0335">
    <property type="taxonomic scope" value="Bacteria"/>
</dbReference>
<dbReference type="HOGENOM" id="CLU_103507_2_1_9"/>
<dbReference type="Proteomes" id="UP000001946">
    <property type="component" value="Chromosome"/>
</dbReference>
<dbReference type="GO" id="GO:0022625">
    <property type="term" value="C:cytosolic large ribosomal subunit"/>
    <property type="evidence" value="ECO:0007669"/>
    <property type="project" value="TreeGrafter"/>
</dbReference>
<dbReference type="GO" id="GO:0003735">
    <property type="term" value="F:structural constituent of ribosome"/>
    <property type="evidence" value="ECO:0007669"/>
    <property type="project" value="InterPro"/>
</dbReference>
<dbReference type="GO" id="GO:0006412">
    <property type="term" value="P:translation"/>
    <property type="evidence" value="ECO:0007669"/>
    <property type="project" value="UniProtKB-UniRule"/>
</dbReference>
<dbReference type="FunFam" id="2.30.30.790:FF:000001">
    <property type="entry name" value="50S ribosomal protein L19"/>
    <property type="match status" value="1"/>
</dbReference>
<dbReference type="Gene3D" id="2.30.30.790">
    <property type="match status" value="1"/>
</dbReference>
<dbReference type="HAMAP" id="MF_00402">
    <property type="entry name" value="Ribosomal_bL19"/>
    <property type="match status" value="1"/>
</dbReference>
<dbReference type="InterPro" id="IPR001857">
    <property type="entry name" value="Ribosomal_bL19"/>
</dbReference>
<dbReference type="InterPro" id="IPR018257">
    <property type="entry name" value="Ribosomal_bL19_CS"/>
</dbReference>
<dbReference type="InterPro" id="IPR038657">
    <property type="entry name" value="Ribosomal_bL19_sf"/>
</dbReference>
<dbReference type="InterPro" id="IPR008991">
    <property type="entry name" value="Translation_prot_SH3-like_sf"/>
</dbReference>
<dbReference type="NCBIfam" id="TIGR01024">
    <property type="entry name" value="rplS_bact"/>
    <property type="match status" value="1"/>
</dbReference>
<dbReference type="PANTHER" id="PTHR15680:SF9">
    <property type="entry name" value="LARGE RIBOSOMAL SUBUNIT PROTEIN BL19M"/>
    <property type="match status" value="1"/>
</dbReference>
<dbReference type="PANTHER" id="PTHR15680">
    <property type="entry name" value="RIBOSOMAL PROTEIN L19"/>
    <property type="match status" value="1"/>
</dbReference>
<dbReference type="Pfam" id="PF01245">
    <property type="entry name" value="Ribosomal_L19"/>
    <property type="match status" value="1"/>
</dbReference>
<dbReference type="PIRSF" id="PIRSF002191">
    <property type="entry name" value="Ribosomal_L19"/>
    <property type="match status" value="1"/>
</dbReference>
<dbReference type="PRINTS" id="PR00061">
    <property type="entry name" value="RIBOSOMALL19"/>
</dbReference>
<dbReference type="SUPFAM" id="SSF50104">
    <property type="entry name" value="Translation proteins SH3-like domain"/>
    <property type="match status" value="1"/>
</dbReference>
<dbReference type="PROSITE" id="PS01015">
    <property type="entry name" value="RIBOSOMAL_L19"/>
    <property type="match status" value="1"/>
</dbReference>
<comment type="function">
    <text evidence="1">This protein is located at the 30S-50S ribosomal subunit interface and may play a role in the structure and function of the aminoacyl-tRNA binding site.</text>
</comment>
<comment type="similarity">
    <text evidence="1">Belongs to the bacterial ribosomal protein bL19 family.</text>
</comment>
<reference key="1">
    <citation type="journal article" date="2006" name="J. Bacteriol.">
        <title>Complete genome sequence of the dehalorespiring bacterium Desulfitobacterium hafniense Y51 and comparison with Dehalococcoides ethenogenes 195.</title>
        <authorList>
            <person name="Nonaka H."/>
            <person name="Keresztes G."/>
            <person name="Shinoda Y."/>
            <person name="Ikenaga Y."/>
            <person name="Abe M."/>
            <person name="Naito K."/>
            <person name="Inatomi K."/>
            <person name="Furukawa K."/>
            <person name="Inui M."/>
            <person name="Yukawa H."/>
        </authorList>
    </citation>
    <scope>NUCLEOTIDE SEQUENCE [LARGE SCALE GENOMIC DNA]</scope>
    <source>
        <strain>Y51</strain>
    </source>
</reference>
<evidence type="ECO:0000255" key="1">
    <source>
        <dbReference type="HAMAP-Rule" id="MF_00402"/>
    </source>
</evidence>
<evidence type="ECO:0000305" key="2"/>
<feature type="chain" id="PRO_0000252505" description="Large ribosomal subunit protein bL19">
    <location>
        <begin position="1"/>
        <end position="113"/>
    </location>
</feature>
<sequence>MDFIRMIEEEQMKKDLPAFRPGDTVRVHVKVVEGTRERIQAFEGVVIKMKGGGLRRTFTVRRVTYGVGVERTFPLHSPRIDRIEVIRRGIVRRAKLYYLRELSGKAARIRDRR</sequence>
<protein>
    <recommendedName>
        <fullName evidence="1">Large ribosomal subunit protein bL19</fullName>
    </recommendedName>
    <alternativeName>
        <fullName evidence="2">50S ribosomal protein L19</fullName>
    </alternativeName>
</protein>
<name>RL19_DESHY</name>
<gene>
    <name evidence="1" type="primary">rplS</name>
    <name type="ordered locus">DSY2592</name>
</gene>
<proteinExistence type="inferred from homology"/>
<accession>Q24UB1</accession>
<organism>
    <name type="scientific">Desulfitobacterium hafniense (strain Y51)</name>
    <dbReference type="NCBI Taxonomy" id="138119"/>
    <lineage>
        <taxon>Bacteria</taxon>
        <taxon>Bacillati</taxon>
        <taxon>Bacillota</taxon>
        <taxon>Clostridia</taxon>
        <taxon>Eubacteriales</taxon>
        <taxon>Desulfitobacteriaceae</taxon>
        <taxon>Desulfitobacterium</taxon>
    </lineage>
</organism>
<keyword id="KW-1185">Reference proteome</keyword>
<keyword id="KW-0687">Ribonucleoprotein</keyword>
<keyword id="KW-0689">Ribosomal protein</keyword>